<dbReference type="EMBL" id="AAHF01000011">
    <property type="protein sequence ID" value="EAL85977.2"/>
    <property type="molecule type" value="Genomic_DNA"/>
</dbReference>
<dbReference type="RefSeq" id="XP_748015.2">
    <property type="nucleotide sequence ID" value="XM_742922.2"/>
</dbReference>
<dbReference type="STRING" id="330879.Q4WEK0"/>
<dbReference type="EnsemblFungi" id="EAL85977">
    <property type="protein sequence ID" value="EAL85977"/>
    <property type="gene ID" value="AFUA_5G03280"/>
</dbReference>
<dbReference type="GeneID" id="3505661"/>
<dbReference type="KEGG" id="afm:AFUA_5G03280"/>
<dbReference type="VEuPathDB" id="FungiDB:Afu5g03280"/>
<dbReference type="eggNOG" id="ENOG502RNW0">
    <property type="taxonomic scope" value="Eukaryota"/>
</dbReference>
<dbReference type="HOGENOM" id="CLU_1402804_0_0_1"/>
<dbReference type="InParanoid" id="Q4WEK0"/>
<dbReference type="OMA" id="YEAYTCP"/>
<dbReference type="OrthoDB" id="4292214at2759"/>
<dbReference type="Proteomes" id="UP000002530">
    <property type="component" value="Chromosome 5"/>
</dbReference>
<dbReference type="GO" id="GO:0005576">
    <property type="term" value="C:extracellular region"/>
    <property type="evidence" value="ECO:0007669"/>
    <property type="project" value="UniProtKB-KW"/>
</dbReference>
<dbReference type="GO" id="GO:0009277">
    <property type="term" value="C:fungal-type cell wall"/>
    <property type="evidence" value="ECO:0007669"/>
    <property type="project" value="InterPro"/>
</dbReference>
<dbReference type="GO" id="GO:0005199">
    <property type="term" value="F:structural constituent of cell wall"/>
    <property type="evidence" value="ECO:0007669"/>
    <property type="project" value="InterPro"/>
</dbReference>
<dbReference type="CDD" id="cd23507">
    <property type="entry name" value="hydrophobin_I"/>
    <property type="match status" value="1"/>
</dbReference>
<dbReference type="InterPro" id="IPR001338">
    <property type="entry name" value="Hydrophobin"/>
</dbReference>
<dbReference type="Pfam" id="PF01185">
    <property type="entry name" value="Hydrophobin"/>
    <property type="match status" value="1"/>
</dbReference>
<gene>
    <name evidence="4" type="primary">rodF</name>
    <name type="ORF">AFUA_5G03280</name>
</gene>
<feature type="signal peptide" evidence="2">
    <location>
        <begin position="1"/>
        <end position="18"/>
    </location>
</feature>
<feature type="chain" id="PRO_5004246175" description="Class III hydrophobin F">
    <location>
        <begin position="19"/>
        <end position="190"/>
    </location>
</feature>
<feature type="disulfide bond" evidence="1">
    <location>
        <begin position="54"/>
        <end position="115"/>
    </location>
</feature>
<feature type="disulfide bond" evidence="1">
    <location>
        <begin position="62"/>
        <end position="109"/>
    </location>
</feature>
<feature type="disulfide bond" evidence="1">
    <location>
        <begin position="63"/>
        <end position="97"/>
    </location>
</feature>
<feature type="disulfide bond" evidence="1">
    <location>
        <begin position="116"/>
        <end position="131"/>
    </location>
</feature>
<protein>
    <recommendedName>
        <fullName evidence="4">Class III hydrophobin F</fullName>
    </recommendedName>
    <alternativeName>
        <fullName evidence="4">Rodlet protein F</fullName>
    </alternativeName>
</protein>
<evidence type="ECO:0000250" key="1">
    <source>
        <dbReference type="UniProtKB" id="Q04571"/>
    </source>
</evidence>
<evidence type="ECO:0000255" key="2"/>
<evidence type="ECO:0000269" key="3">
    <source>
    </source>
</evidence>
<evidence type="ECO:0000303" key="4">
    <source>
    </source>
</evidence>
<evidence type="ECO:0000305" key="5"/>
<evidence type="ECO:0000305" key="6">
    <source>
    </source>
</evidence>
<comment type="function">
    <text evidence="3 5 6">Aerial growth, conidiation, and dispersal of filamentous fungi in the environment rely upon a capability of their secreting small amphipathic proteins called hydrophobins (HPBs) with low sequence identity. Class I can self-assemble into an outermost layer of rodlet bundles on aerial cell surfaces, conferring cellular hydrophobicity that supports fungal growth, development and dispersal; whereas Class II form highly ordered films at water-air interfaces through intermolecular interactions but contribute nothing to the rodlet structure (Probable). RodF and rodG belong to Class III, which contains hydrophobins with intermediate (between classes I and II) or atypical characteristics (Probable). RodF, unlike rodA, is not required for rodlet formation (PubMed:29371496).</text>
</comment>
<comment type="subunit">
    <text evidence="1">Self-assembles to form functional amyloid fibrils called rodlets. Self-assembly into fibrillar rodlets occurs spontaneously at hydrophobic:hydrophilic interfaces and the rodlets further associate laterally to form amphipathic monolayers.</text>
</comment>
<comment type="subcellular location">
    <subcellularLocation>
        <location evidence="1">Secreted</location>
    </subcellularLocation>
    <subcellularLocation>
        <location evidence="1">Secreted</location>
        <location evidence="1">Cell wall</location>
    </subcellularLocation>
</comment>
<comment type="induction">
    <text evidence="3">Only expressed at moderate levels in planktonic and sporulating conditions.</text>
</comment>
<comment type="domain">
    <text evidence="3">RodF contains a signal peptide and the conserved Cys-pattern. Although RodF contains one extra cysteine residue, it is located in the N-terminal secretion peptide. Its hydrophobicity profile resembles that of class I hydrophobins except on the C7-C8 region, where class I hydrophobins show a highly hydrophobic sequence close to C8.</text>
</comment>
<comment type="similarity">
    <text evidence="5">Belongs to the fungal hydrophobin family.</text>
</comment>
<organism>
    <name type="scientific">Aspergillus fumigatus (strain ATCC MYA-4609 / CBS 101355 / FGSC A1100 / Af293)</name>
    <name type="common">Neosartorya fumigata</name>
    <dbReference type="NCBI Taxonomy" id="330879"/>
    <lineage>
        <taxon>Eukaryota</taxon>
        <taxon>Fungi</taxon>
        <taxon>Dikarya</taxon>
        <taxon>Ascomycota</taxon>
        <taxon>Pezizomycotina</taxon>
        <taxon>Eurotiomycetes</taxon>
        <taxon>Eurotiomycetidae</taxon>
        <taxon>Eurotiales</taxon>
        <taxon>Aspergillaceae</taxon>
        <taxon>Aspergillus</taxon>
        <taxon>Aspergillus subgen. Fumigati</taxon>
    </lineage>
</organism>
<name>RODF_ASPFU</name>
<reference key="1">
    <citation type="journal article" date="2005" name="Nature">
        <title>Genomic sequence of the pathogenic and allergenic filamentous fungus Aspergillus fumigatus.</title>
        <authorList>
            <person name="Nierman W.C."/>
            <person name="Pain A."/>
            <person name="Anderson M.J."/>
            <person name="Wortman J.R."/>
            <person name="Kim H.S."/>
            <person name="Arroyo J."/>
            <person name="Berriman M."/>
            <person name="Abe K."/>
            <person name="Archer D.B."/>
            <person name="Bermejo C."/>
            <person name="Bennett J.W."/>
            <person name="Bowyer P."/>
            <person name="Chen D."/>
            <person name="Collins M."/>
            <person name="Coulsen R."/>
            <person name="Davies R."/>
            <person name="Dyer P.S."/>
            <person name="Farman M.L."/>
            <person name="Fedorova N."/>
            <person name="Fedorova N.D."/>
            <person name="Feldblyum T.V."/>
            <person name="Fischer R."/>
            <person name="Fosker N."/>
            <person name="Fraser A."/>
            <person name="Garcia J.L."/>
            <person name="Garcia M.J."/>
            <person name="Goble A."/>
            <person name="Goldman G.H."/>
            <person name="Gomi K."/>
            <person name="Griffith-Jones S."/>
            <person name="Gwilliam R."/>
            <person name="Haas B.J."/>
            <person name="Haas H."/>
            <person name="Harris D.E."/>
            <person name="Horiuchi H."/>
            <person name="Huang J."/>
            <person name="Humphray S."/>
            <person name="Jimenez J."/>
            <person name="Keller N."/>
            <person name="Khouri H."/>
            <person name="Kitamoto K."/>
            <person name="Kobayashi T."/>
            <person name="Konzack S."/>
            <person name="Kulkarni R."/>
            <person name="Kumagai T."/>
            <person name="Lafton A."/>
            <person name="Latge J.-P."/>
            <person name="Li W."/>
            <person name="Lord A."/>
            <person name="Lu C."/>
            <person name="Majoros W.H."/>
            <person name="May G.S."/>
            <person name="Miller B.L."/>
            <person name="Mohamoud Y."/>
            <person name="Molina M."/>
            <person name="Monod M."/>
            <person name="Mouyna I."/>
            <person name="Mulligan S."/>
            <person name="Murphy L.D."/>
            <person name="O'Neil S."/>
            <person name="Paulsen I."/>
            <person name="Penalva M.A."/>
            <person name="Pertea M."/>
            <person name="Price C."/>
            <person name="Pritchard B.L."/>
            <person name="Quail M.A."/>
            <person name="Rabbinowitsch E."/>
            <person name="Rawlins N."/>
            <person name="Rajandream M.A."/>
            <person name="Reichard U."/>
            <person name="Renauld H."/>
            <person name="Robson G.D."/>
            <person name="Rodriguez de Cordoba S."/>
            <person name="Rodriguez-Pena J.M."/>
            <person name="Ronning C.M."/>
            <person name="Rutter S."/>
            <person name="Salzberg S.L."/>
            <person name="Sanchez M."/>
            <person name="Sanchez-Ferrero J.C."/>
            <person name="Saunders D."/>
            <person name="Seeger K."/>
            <person name="Squares R."/>
            <person name="Squares S."/>
            <person name="Takeuchi M."/>
            <person name="Tekaia F."/>
            <person name="Turner G."/>
            <person name="Vazquez de Aldana C.R."/>
            <person name="Weidman J."/>
            <person name="White O."/>
            <person name="Woodward J.R."/>
            <person name="Yu J.-H."/>
            <person name="Fraser C.M."/>
            <person name="Galagan J.E."/>
            <person name="Asai K."/>
            <person name="Machida M."/>
            <person name="Hall N."/>
            <person name="Barrell B.G."/>
            <person name="Denning D.W."/>
        </authorList>
    </citation>
    <scope>NUCLEOTIDE SEQUENCE [LARGE SCALE GENOMIC DNA]</scope>
    <source>
        <strain>ATCC MYA-4609 / CBS 101355 / FGSC A1100 / Af293</strain>
    </source>
</reference>
<reference key="2">
    <citation type="journal article" date="2017" name="J. Fungi">
        <title>Role of Hydrophobins in Aspergillus fumigatus.</title>
        <authorList>
            <person name="Valsecchi I."/>
            <person name="Dupres V."/>
            <person name="Stephen-Victor E."/>
            <person name="Guijarro J.I."/>
            <person name="Gibbons J."/>
            <person name="Beau R."/>
            <person name="Bayry J."/>
            <person name="Coppee J.Y."/>
            <person name="Lafont F."/>
            <person name="Latge J.P."/>
            <person name="Beauvais A."/>
        </authorList>
    </citation>
    <scope>FUNCTION</scope>
    <scope>DOMAIN</scope>
    <scope>INDUCTION</scope>
</reference>
<accession>Q4WEK0</accession>
<proteinExistence type="evidence at transcript level"/>
<sequence length="190" mass="19843">MRPITILCTLATLSTTLAVPFSQASKSTSASRSTSSSTVPASLPSPTLSGPNACPPNKFKQCCTTLSQVGDDLLKPLGAVVPLVGAIQVNSLVGVSCRPMADAAPESTCGNAVMCCDSSTVGGDDLMQTSCQDFALAKKREREAIERQQRRFSEYQRMMLSQSATPAPTSTGVDVMGSSFSKAKATPTRV</sequence>
<keyword id="KW-0134">Cell wall</keyword>
<keyword id="KW-1015">Disulfide bond</keyword>
<keyword id="KW-1185">Reference proteome</keyword>
<keyword id="KW-0964">Secreted</keyword>
<keyword id="KW-0732">Signal</keyword>